<evidence type="ECO:0000250" key="1"/>
<evidence type="ECO:0000305" key="2"/>
<dbReference type="EC" id="1.14.-.-"/>
<dbReference type="EMBL" id="U91634">
    <property type="protein sequence ID" value="AAB68664.1"/>
    <property type="molecule type" value="mRNA"/>
</dbReference>
<dbReference type="SMR" id="O18596"/>
<dbReference type="GO" id="GO:0005789">
    <property type="term" value="C:endoplasmic reticulum membrane"/>
    <property type="evidence" value="ECO:0007669"/>
    <property type="project" value="UniProtKB-SubCell"/>
</dbReference>
<dbReference type="GO" id="GO:0020037">
    <property type="term" value="F:heme binding"/>
    <property type="evidence" value="ECO:0007669"/>
    <property type="project" value="InterPro"/>
</dbReference>
<dbReference type="GO" id="GO:0005506">
    <property type="term" value="F:iron ion binding"/>
    <property type="evidence" value="ECO:0007669"/>
    <property type="project" value="InterPro"/>
</dbReference>
<dbReference type="GO" id="GO:0004497">
    <property type="term" value="F:monooxygenase activity"/>
    <property type="evidence" value="ECO:0007669"/>
    <property type="project" value="UniProtKB-KW"/>
</dbReference>
<dbReference type="GO" id="GO:0016705">
    <property type="term" value="F:oxidoreductase activity, acting on paired donors, with incorporation or reduction of molecular oxygen"/>
    <property type="evidence" value="ECO:0007669"/>
    <property type="project" value="InterPro"/>
</dbReference>
<dbReference type="CDD" id="cd20628">
    <property type="entry name" value="CYP4"/>
    <property type="match status" value="1"/>
</dbReference>
<dbReference type="Gene3D" id="1.10.630.10">
    <property type="entry name" value="Cytochrome P450"/>
    <property type="match status" value="1"/>
</dbReference>
<dbReference type="InterPro" id="IPR001128">
    <property type="entry name" value="Cyt_P450"/>
</dbReference>
<dbReference type="InterPro" id="IPR017972">
    <property type="entry name" value="Cyt_P450_CS"/>
</dbReference>
<dbReference type="InterPro" id="IPR002401">
    <property type="entry name" value="Cyt_P450_E_grp-I"/>
</dbReference>
<dbReference type="InterPro" id="IPR036396">
    <property type="entry name" value="Cyt_P450_sf"/>
</dbReference>
<dbReference type="InterPro" id="IPR050196">
    <property type="entry name" value="Cytochrome_P450_Monoox"/>
</dbReference>
<dbReference type="PANTHER" id="PTHR24291:SF203">
    <property type="entry name" value="CYTOCHROME P450 4D1-RELATED"/>
    <property type="match status" value="1"/>
</dbReference>
<dbReference type="PANTHER" id="PTHR24291">
    <property type="entry name" value="CYTOCHROME P450 FAMILY 4"/>
    <property type="match status" value="1"/>
</dbReference>
<dbReference type="Pfam" id="PF00067">
    <property type="entry name" value="p450"/>
    <property type="match status" value="1"/>
</dbReference>
<dbReference type="PRINTS" id="PR00463">
    <property type="entry name" value="EP450I"/>
</dbReference>
<dbReference type="PRINTS" id="PR00385">
    <property type="entry name" value="P450"/>
</dbReference>
<dbReference type="SUPFAM" id="SSF48264">
    <property type="entry name" value="Cytochrome P450"/>
    <property type="match status" value="1"/>
</dbReference>
<dbReference type="PROSITE" id="PS00086">
    <property type="entry name" value="CYTOCHROME_P450"/>
    <property type="match status" value="1"/>
</dbReference>
<keyword id="KW-0256">Endoplasmic reticulum</keyword>
<keyword id="KW-0349">Heme</keyword>
<keyword id="KW-0408">Iron</keyword>
<keyword id="KW-0472">Membrane</keyword>
<keyword id="KW-0479">Metal-binding</keyword>
<keyword id="KW-0492">Microsome</keyword>
<keyword id="KW-0503">Monooxygenase</keyword>
<keyword id="KW-0560">Oxidoreductase</keyword>
<sequence length="513" mass="58731">MSLSLPPLIAVACLVVALARISWLPLRSWLRRRRRTHQLAAQLPGPRNLPLLGNFHMFFGLEPWQVPHLINQLAKKYDGTFKLKMGSNFSLMMFQPRDIEVVLGSSQLLDKAVEYSFLRGWLNDGLLLSGGRKWHRRRKIITPAFHFRILESYDEIFDRQTRLLIHKWQQTLGHSFDLGHDVHLFTLDVICETAMGVSTNAQTNADSDYVRAVKTISTVLHKRMFNIFYRFDLTYMLTPLAWAERRALNVLHKFTEKIIVQRREELLRGGVTQTTDGADVGAKSKMVFLDILLQSNIDDKPLTNLDIREEVDTFMFEGHDTTSSGITFFFYNIALYPECQRKCVEEIVSVLGKDTETPVTYDLLNNLNYMDLCIKETLRMYPSVPLLGRKVLQECEINGKIIPAGTNIGISPLFLGRSEDISSEPNTFKPERFDVVTSAEKLNPHAYIPFSAGPRNCIGQKFAMLEIKAIAANVLRHYEIEFVGNAEESPVLIAELILRTKDPLMFKLKKRVI</sequence>
<feature type="chain" id="PRO_0000051836" description="Cytochrome P450 4d10">
    <location>
        <begin position="1"/>
        <end position="513"/>
    </location>
</feature>
<feature type="binding site" description="covalent" evidence="1">
    <location>
        <position position="317"/>
    </location>
    <ligand>
        <name>heme</name>
        <dbReference type="ChEBI" id="CHEBI:30413"/>
    </ligand>
</feature>
<feature type="binding site" description="axial binding residue" evidence="1">
    <location>
        <position position="457"/>
    </location>
    <ligand>
        <name>heme</name>
        <dbReference type="ChEBI" id="CHEBI:30413"/>
    </ligand>
    <ligandPart>
        <name>Fe</name>
        <dbReference type="ChEBI" id="CHEBI:18248"/>
    </ligandPart>
</feature>
<accession>O18596</accession>
<reference key="1">
    <citation type="journal article" date="1998" name="Mol. Gen. Genet.">
        <title>Induction by alkaloids and phenobarbital of family 4 cytochrome P450s in Drosophila: evidence for involvement in host plant utilization.</title>
        <authorList>
            <person name="Danielson P.B."/>
            <person name="Foster J.L."/>
            <person name="McMahill M.M."/>
            <person name="Smith M.K."/>
            <person name="Fogleman J.C."/>
        </authorList>
    </citation>
    <scope>NUCLEOTIDE SEQUENCE [MRNA]</scope>
    <scope>CHARACTERIZATION</scope>
    <source>
        <tissue>Larva</tissue>
    </source>
</reference>
<organism>
    <name type="scientific">Drosophila mettleri</name>
    <name type="common">Fruit fly</name>
    <dbReference type="NCBI Taxonomy" id="7228"/>
    <lineage>
        <taxon>Eukaryota</taxon>
        <taxon>Metazoa</taxon>
        <taxon>Ecdysozoa</taxon>
        <taxon>Arthropoda</taxon>
        <taxon>Hexapoda</taxon>
        <taxon>Insecta</taxon>
        <taxon>Pterygota</taxon>
        <taxon>Neoptera</taxon>
        <taxon>Endopterygota</taxon>
        <taxon>Diptera</taxon>
        <taxon>Brachycera</taxon>
        <taxon>Muscomorpha</taxon>
        <taxon>Ephydroidea</taxon>
        <taxon>Drosophilidae</taxon>
        <taxon>Drosophila</taxon>
    </lineage>
</organism>
<proteinExistence type="evidence at protein level"/>
<comment type="function">
    <text>May play an important role in the maintenance of specific insect-host plant relationships. May be involved in xenobiotic metabolism.</text>
</comment>
<comment type="cofactor">
    <cofactor evidence="1">
        <name>heme</name>
        <dbReference type="ChEBI" id="CHEBI:30413"/>
    </cofactor>
</comment>
<comment type="subcellular location">
    <subcellularLocation>
        <location evidence="2">Endoplasmic reticulum membrane</location>
        <topology evidence="2">Peripheral membrane protein</topology>
    </subcellularLocation>
    <subcellularLocation>
        <location evidence="2">Microsome membrane</location>
        <topology evidence="2">Peripheral membrane protein</topology>
    </subcellularLocation>
</comment>
<comment type="induction">
    <text>By isoquinoline alkaloids and phenobarbital.</text>
</comment>
<comment type="similarity">
    <text evidence="2">Belongs to the cytochrome P450 family.</text>
</comment>
<name>C4D10_DROMT</name>
<gene>
    <name type="primary">Cyp4d10</name>
</gene>
<protein>
    <recommendedName>
        <fullName>Cytochrome P450 4d10</fullName>
        <ecNumber>1.14.-.-</ecNumber>
    </recommendedName>
    <alternativeName>
        <fullName>CYPIVD10</fullName>
    </alternativeName>
</protein>